<keyword id="KW-0004">4Fe-4S</keyword>
<keyword id="KW-0963">Cytoplasm</keyword>
<keyword id="KW-0408">Iron</keyword>
<keyword id="KW-0411">Iron-sulfur</keyword>
<keyword id="KW-0479">Metal-binding</keyword>
<keyword id="KW-0662">Pyridine nucleotide biosynthesis</keyword>
<keyword id="KW-0808">Transferase</keyword>
<proteinExistence type="inferred from homology"/>
<sequence>MSILEKVQPIETMLPERYYTMSTEDMEKRVREIKEKMGETLFIPGHHYQKDEVVQFSDAAGDSLQLAQVAASNKEAKYIVFCGVHFMAETADMLTTDEQVVILPDMRAGCSMADMADIEQTERAWKELTKLFGDTMIPLTYVNSTAAIKAFCGRNGGATVTSSNAKQMVSWAFTQKERLVFLPDQHLGRNTAYDLGIPLDKMAVWDPHTDSLEYDGDIEEIQVILWKGHCSVHQNFTVKNIENVRKNHPDMNIIVHPECCYEVVAASDYAGSTKYIIDMIESAPSGSKWAIGTEMNLVNRIIQQHPDKEIVSLNPFMCPCLTMNRIDLPHLLWALETIERGEEINVISVDKQVTEEAVLALNRMLERV</sequence>
<name>NADA_BACC7</name>
<evidence type="ECO:0000255" key="1">
    <source>
        <dbReference type="HAMAP-Rule" id="MF_00569"/>
    </source>
</evidence>
<feature type="chain" id="PRO_1000129454" description="Quinolinate synthase">
    <location>
        <begin position="1"/>
        <end position="368"/>
    </location>
</feature>
<feature type="binding site" evidence="1">
    <location>
        <position position="46"/>
    </location>
    <ligand>
        <name>iminosuccinate</name>
        <dbReference type="ChEBI" id="CHEBI:77875"/>
    </ligand>
</feature>
<feature type="binding site" evidence="1">
    <location>
        <position position="63"/>
    </location>
    <ligand>
        <name>iminosuccinate</name>
        <dbReference type="ChEBI" id="CHEBI:77875"/>
    </ligand>
</feature>
<feature type="binding site" evidence="1">
    <location>
        <position position="110"/>
    </location>
    <ligand>
        <name>[4Fe-4S] cluster</name>
        <dbReference type="ChEBI" id="CHEBI:49883"/>
    </ligand>
</feature>
<feature type="binding site" evidence="1">
    <location>
        <begin position="141"/>
        <end position="143"/>
    </location>
    <ligand>
        <name>iminosuccinate</name>
        <dbReference type="ChEBI" id="CHEBI:77875"/>
    </ligand>
</feature>
<feature type="binding site" evidence="1">
    <location>
        <position position="162"/>
    </location>
    <ligand>
        <name>iminosuccinate</name>
        <dbReference type="ChEBI" id="CHEBI:77875"/>
    </ligand>
</feature>
<feature type="binding site" evidence="1">
    <location>
        <position position="230"/>
    </location>
    <ligand>
        <name>[4Fe-4S] cluster</name>
        <dbReference type="ChEBI" id="CHEBI:49883"/>
    </ligand>
</feature>
<feature type="binding site" evidence="1">
    <location>
        <begin position="256"/>
        <end position="258"/>
    </location>
    <ligand>
        <name>iminosuccinate</name>
        <dbReference type="ChEBI" id="CHEBI:77875"/>
    </ligand>
</feature>
<feature type="binding site" evidence="1">
    <location>
        <position position="273"/>
    </location>
    <ligand>
        <name>iminosuccinate</name>
        <dbReference type="ChEBI" id="CHEBI:77875"/>
    </ligand>
</feature>
<feature type="binding site" evidence="1">
    <location>
        <position position="320"/>
    </location>
    <ligand>
        <name>[4Fe-4S] cluster</name>
        <dbReference type="ChEBI" id="CHEBI:49883"/>
    </ligand>
</feature>
<reference key="1">
    <citation type="submission" date="2008-10" db="EMBL/GenBank/DDBJ databases">
        <title>Genome sequence of Bacillus cereus AH187.</title>
        <authorList>
            <person name="Dodson R.J."/>
            <person name="Durkin A.S."/>
            <person name="Rosovitz M.J."/>
            <person name="Rasko D.A."/>
            <person name="Kolsto A.B."/>
            <person name="Okstad O.A."/>
            <person name="Ravel J."/>
            <person name="Sutton G."/>
        </authorList>
    </citation>
    <scope>NUCLEOTIDE SEQUENCE [LARGE SCALE GENOMIC DNA]</scope>
    <source>
        <strain>AH187</strain>
    </source>
</reference>
<gene>
    <name evidence="1" type="primary">nadA</name>
    <name type="ordered locus">BCAH187_A4561</name>
</gene>
<accession>B7HQI6</accession>
<organism>
    <name type="scientific">Bacillus cereus (strain AH187)</name>
    <dbReference type="NCBI Taxonomy" id="405534"/>
    <lineage>
        <taxon>Bacteria</taxon>
        <taxon>Bacillati</taxon>
        <taxon>Bacillota</taxon>
        <taxon>Bacilli</taxon>
        <taxon>Bacillales</taxon>
        <taxon>Bacillaceae</taxon>
        <taxon>Bacillus</taxon>
        <taxon>Bacillus cereus group</taxon>
    </lineage>
</organism>
<comment type="function">
    <text evidence="1">Catalyzes the condensation of iminoaspartate with dihydroxyacetone phosphate to form quinolinate.</text>
</comment>
<comment type="catalytic activity">
    <reaction evidence="1">
        <text>iminosuccinate + dihydroxyacetone phosphate = quinolinate + phosphate + 2 H2O + H(+)</text>
        <dbReference type="Rhea" id="RHEA:25888"/>
        <dbReference type="ChEBI" id="CHEBI:15377"/>
        <dbReference type="ChEBI" id="CHEBI:15378"/>
        <dbReference type="ChEBI" id="CHEBI:29959"/>
        <dbReference type="ChEBI" id="CHEBI:43474"/>
        <dbReference type="ChEBI" id="CHEBI:57642"/>
        <dbReference type="ChEBI" id="CHEBI:77875"/>
        <dbReference type="EC" id="2.5.1.72"/>
    </reaction>
    <physiologicalReaction direction="left-to-right" evidence="1">
        <dbReference type="Rhea" id="RHEA:25889"/>
    </physiologicalReaction>
</comment>
<comment type="cofactor">
    <cofactor evidence="1">
        <name>[4Fe-4S] cluster</name>
        <dbReference type="ChEBI" id="CHEBI:49883"/>
    </cofactor>
    <text evidence="1">Binds 1 [4Fe-4S] cluster per subunit.</text>
</comment>
<comment type="pathway">
    <text evidence="1">Cofactor biosynthesis; NAD(+) biosynthesis; quinolinate from iminoaspartate: step 1/1.</text>
</comment>
<comment type="subcellular location">
    <subcellularLocation>
        <location evidence="1">Cytoplasm</location>
    </subcellularLocation>
</comment>
<comment type="similarity">
    <text evidence="1">Belongs to the quinolinate synthase family. Type 3 subfamily.</text>
</comment>
<protein>
    <recommendedName>
        <fullName evidence="1">Quinolinate synthase</fullName>
        <ecNumber evidence="1">2.5.1.72</ecNumber>
    </recommendedName>
</protein>
<dbReference type="EC" id="2.5.1.72" evidence="1"/>
<dbReference type="EMBL" id="CP001177">
    <property type="protein sequence ID" value="ACJ77589.1"/>
    <property type="molecule type" value="Genomic_DNA"/>
</dbReference>
<dbReference type="SMR" id="B7HQI6"/>
<dbReference type="KEGG" id="bcr:BCAH187_A4561"/>
<dbReference type="HOGENOM" id="CLU_047382_2_0_9"/>
<dbReference type="UniPathway" id="UPA00253">
    <property type="reaction ID" value="UER00327"/>
</dbReference>
<dbReference type="Proteomes" id="UP000002214">
    <property type="component" value="Chromosome"/>
</dbReference>
<dbReference type="GO" id="GO:0005829">
    <property type="term" value="C:cytosol"/>
    <property type="evidence" value="ECO:0007669"/>
    <property type="project" value="TreeGrafter"/>
</dbReference>
<dbReference type="GO" id="GO:0051539">
    <property type="term" value="F:4 iron, 4 sulfur cluster binding"/>
    <property type="evidence" value="ECO:0007669"/>
    <property type="project" value="UniProtKB-KW"/>
</dbReference>
<dbReference type="GO" id="GO:0046872">
    <property type="term" value="F:metal ion binding"/>
    <property type="evidence" value="ECO:0007669"/>
    <property type="project" value="UniProtKB-KW"/>
</dbReference>
<dbReference type="GO" id="GO:0008987">
    <property type="term" value="F:quinolinate synthetase A activity"/>
    <property type="evidence" value="ECO:0007669"/>
    <property type="project" value="UniProtKB-UniRule"/>
</dbReference>
<dbReference type="GO" id="GO:0034628">
    <property type="term" value="P:'de novo' NAD biosynthetic process from L-aspartate"/>
    <property type="evidence" value="ECO:0007669"/>
    <property type="project" value="TreeGrafter"/>
</dbReference>
<dbReference type="FunFam" id="3.40.50.10800:FF:000001">
    <property type="entry name" value="Quinolinate synthase A"/>
    <property type="match status" value="1"/>
</dbReference>
<dbReference type="Gene3D" id="3.40.50.10800">
    <property type="entry name" value="NadA-like"/>
    <property type="match status" value="3"/>
</dbReference>
<dbReference type="HAMAP" id="MF_00569">
    <property type="entry name" value="NadA_type3"/>
    <property type="match status" value="1"/>
</dbReference>
<dbReference type="InterPro" id="IPR003473">
    <property type="entry name" value="NadA"/>
</dbReference>
<dbReference type="InterPro" id="IPR036094">
    <property type="entry name" value="NadA_sf"/>
</dbReference>
<dbReference type="InterPro" id="IPR023515">
    <property type="entry name" value="Quinolinate_synth_A_type3"/>
</dbReference>
<dbReference type="NCBIfam" id="TIGR00550">
    <property type="entry name" value="nadA"/>
    <property type="match status" value="1"/>
</dbReference>
<dbReference type="NCBIfam" id="NF006880">
    <property type="entry name" value="PRK09375.2-1"/>
    <property type="match status" value="1"/>
</dbReference>
<dbReference type="NCBIfam" id="NF006883">
    <property type="entry name" value="PRK09375.2-4"/>
    <property type="match status" value="1"/>
</dbReference>
<dbReference type="PANTHER" id="PTHR30573:SF0">
    <property type="entry name" value="QUINOLINATE SYNTHASE, CHLOROPLASTIC"/>
    <property type="match status" value="1"/>
</dbReference>
<dbReference type="PANTHER" id="PTHR30573">
    <property type="entry name" value="QUINOLINATE SYNTHETASE A"/>
    <property type="match status" value="1"/>
</dbReference>
<dbReference type="Pfam" id="PF02445">
    <property type="entry name" value="NadA"/>
    <property type="match status" value="1"/>
</dbReference>
<dbReference type="SUPFAM" id="SSF142754">
    <property type="entry name" value="NadA-like"/>
    <property type="match status" value="1"/>
</dbReference>